<proteinExistence type="evidence at protein level"/>
<comment type="function">
    <text evidence="1 7 8">Fusarin C synthetase; part of the gene cluster that mediates the biosynthesis of the mycotoxin fusarin C (PubMed:17121404, PubMed:22652150). Within the cluster, FUS1, FUS2, FUS8 and FUS9 are sufficient for fusarin production (By similarity). The roles of the other FUS members are yet undetermined (By similarity). The fusarin C synthetase FUS1 is responsible for the condensation of one acetyl-coenzyme A (CoA) unit with six malonyl-CoA units and the amide linkage of the arising heptaketide and homoserine, subsequently releasing the first intermediate, prefusarin, as an alcohol with an open ring structure (PubMed:17121404). The cytochrome P450 monooxygenase FUS8 participates in multiple oxidation processes at carbon C-20 and is able to use the FUS1 product as substrate, resulting in formation of 20-hydroxy-prefusarin (By similarity). This reaction seems to be essential before the 2-pyrrolidone ring closure can be catalyzed by FUS2, generating 20-hydroxy-fusarin (By similarity). FUS8 is able to further oxidizes carbon C-20 after ring closure, resulting in the formation of carboxy-fusarin C (By similarity). As the last step, FUS9 methylates the hydroxyl group at C-21 to generate fusarin C (By similarity). Fusarin C can then rearrange to epi-fusarin C, the (z)-isomers, and fusarin A and fusarin D (By similarity).</text>
</comment>
<comment type="pathway">
    <text evidence="1 13">Mycotoxin biosynthesis.</text>
</comment>
<comment type="domain">
    <text evidence="11">FUS1 is an unusual polyketide synthase (PKS) fused to a non-ribosomal peptide synthetase (NRPS) module to form a megasynthetase.</text>
</comment>
<comment type="disruption phenotype">
    <text evidence="8">Impairs the production of fusarin C (PubMed:22652150).</text>
</comment>
<comment type="similarity">
    <text evidence="11">In the C-terminal section; belongs to the NRP synthetase family.</text>
</comment>
<gene>
    <name evidence="10" type="primary">FUS1</name>
    <name type="ORF">FVEG_11086</name>
</gene>
<organism>
    <name type="scientific">Gibberella moniliformis (strain M3125 / FGSC 7600)</name>
    <name type="common">Maize ear and stalk rot fungus</name>
    <name type="synonym">Fusarium verticillioides</name>
    <dbReference type="NCBI Taxonomy" id="334819"/>
    <lineage>
        <taxon>Eukaryota</taxon>
        <taxon>Fungi</taxon>
        <taxon>Dikarya</taxon>
        <taxon>Ascomycota</taxon>
        <taxon>Pezizomycotina</taxon>
        <taxon>Sordariomycetes</taxon>
        <taxon>Hypocreomycetidae</taxon>
        <taxon>Hypocreales</taxon>
        <taxon>Nectriaceae</taxon>
        <taxon>Fusarium</taxon>
        <taxon>Fusarium fujikuroi species complex</taxon>
    </lineage>
</organism>
<dbReference type="EC" id="2.3.1.-" evidence="12"/>
<dbReference type="EMBL" id="CM000586">
    <property type="protein sequence ID" value="EWG52308.1"/>
    <property type="molecule type" value="Genomic_DNA"/>
</dbReference>
<dbReference type="RefSeq" id="XP_018758499.1">
    <property type="nucleotide sequence ID" value="XM_018900249.1"/>
</dbReference>
<dbReference type="SMR" id="W7MLD7"/>
<dbReference type="STRING" id="334819.W7MLD7"/>
<dbReference type="GeneID" id="30068622"/>
<dbReference type="KEGG" id="fvr:FVEG_11086"/>
<dbReference type="VEuPathDB" id="FungiDB:FVEG_11086"/>
<dbReference type="eggNOG" id="KOG1178">
    <property type="taxonomic scope" value="Eukaryota"/>
</dbReference>
<dbReference type="eggNOG" id="KOG1202">
    <property type="taxonomic scope" value="Eukaryota"/>
</dbReference>
<dbReference type="OrthoDB" id="135422at110618"/>
<dbReference type="Proteomes" id="UP000009096">
    <property type="component" value="Chromosome 9"/>
</dbReference>
<dbReference type="GO" id="GO:0004315">
    <property type="term" value="F:3-oxoacyl-[acyl-carrier-protein] synthase activity"/>
    <property type="evidence" value="ECO:0007669"/>
    <property type="project" value="InterPro"/>
</dbReference>
<dbReference type="GO" id="GO:0004312">
    <property type="term" value="F:fatty acid synthase activity"/>
    <property type="evidence" value="ECO:0007669"/>
    <property type="project" value="TreeGrafter"/>
</dbReference>
<dbReference type="GO" id="GO:0016853">
    <property type="term" value="F:isomerase activity"/>
    <property type="evidence" value="ECO:0007669"/>
    <property type="project" value="UniProtKB-KW"/>
</dbReference>
<dbReference type="GO" id="GO:0016874">
    <property type="term" value="F:ligase activity"/>
    <property type="evidence" value="ECO:0007669"/>
    <property type="project" value="UniProtKB-KW"/>
</dbReference>
<dbReference type="GO" id="GO:0008168">
    <property type="term" value="F:methyltransferase activity"/>
    <property type="evidence" value="ECO:0007669"/>
    <property type="project" value="UniProtKB-KW"/>
</dbReference>
<dbReference type="GO" id="GO:0016491">
    <property type="term" value="F:oxidoreductase activity"/>
    <property type="evidence" value="ECO:0007669"/>
    <property type="project" value="UniProtKB-KW"/>
</dbReference>
<dbReference type="GO" id="GO:0031177">
    <property type="term" value="F:phosphopantetheine binding"/>
    <property type="evidence" value="ECO:0007669"/>
    <property type="project" value="InterPro"/>
</dbReference>
<dbReference type="GO" id="GO:0006633">
    <property type="term" value="P:fatty acid biosynthetic process"/>
    <property type="evidence" value="ECO:0007669"/>
    <property type="project" value="InterPro"/>
</dbReference>
<dbReference type="GO" id="GO:0032259">
    <property type="term" value="P:methylation"/>
    <property type="evidence" value="ECO:0007669"/>
    <property type="project" value="UniProtKB-KW"/>
</dbReference>
<dbReference type="GO" id="GO:0009403">
    <property type="term" value="P:toxin biosynthetic process"/>
    <property type="evidence" value="ECO:0007669"/>
    <property type="project" value="UniProtKB-ARBA"/>
</dbReference>
<dbReference type="CDD" id="cd05930">
    <property type="entry name" value="A_NRPS"/>
    <property type="match status" value="1"/>
</dbReference>
<dbReference type="CDD" id="cd19532">
    <property type="entry name" value="C_PKS-NRPS"/>
    <property type="match status" value="1"/>
</dbReference>
<dbReference type="CDD" id="cd00833">
    <property type="entry name" value="PKS"/>
    <property type="match status" value="1"/>
</dbReference>
<dbReference type="FunFam" id="3.40.47.10:FF:000019">
    <property type="entry name" value="Polyketide synthase type I"/>
    <property type="match status" value="1"/>
</dbReference>
<dbReference type="Gene3D" id="3.30.300.30">
    <property type="match status" value="1"/>
</dbReference>
<dbReference type="Gene3D" id="3.40.47.10">
    <property type="match status" value="1"/>
</dbReference>
<dbReference type="Gene3D" id="1.10.1200.10">
    <property type="entry name" value="ACP-like"/>
    <property type="match status" value="2"/>
</dbReference>
<dbReference type="Gene3D" id="3.30.559.10">
    <property type="entry name" value="Chloramphenicol acetyltransferase-like domain"/>
    <property type="match status" value="1"/>
</dbReference>
<dbReference type="Gene3D" id="3.40.366.10">
    <property type="entry name" value="Malonyl-Coenzyme A Acyl Carrier Protein, domain 2"/>
    <property type="match status" value="1"/>
</dbReference>
<dbReference type="Gene3D" id="3.40.50.12780">
    <property type="entry name" value="N-terminal domain of ligase-like"/>
    <property type="match status" value="1"/>
</dbReference>
<dbReference type="Gene3D" id="3.40.50.720">
    <property type="entry name" value="NAD(P)-binding Rossmann-like Domain"/>
    <property type="match status" value="3"/>
</dbReference>
<dbReference type="Gene3D" id="3.30.559.30">
    <property type="entry name" value="Nonribosomal peptide synthetase, condensation domain"/>
    <property type="match status" value="1"/>
</dbReference>
<dbReference type="Gene3D" id="3.10.129.110">
    <property type="entry name" value="Polyketide synthase dehydratase"/>
    <property type="match status" value="1"/>
</dbReference>
<dbReference type="Gene3D" id="3.40.50.150">
    <property type="entry name" value="Vaccinia Virus protein VP39"/>
    <property type="match status" value="1"/>
</dbReference>
<dbReference type="InterPro" id="IPR010071">
    <property type="entry name" value="AA_adenyl_dom"/>
</dbReference>
<dbReference type="InterPro" id="IPR001227">
    <property type="entry name" value="Ac_transferase_dom_sf"/>
</dbReference>
<dbReference type="InterPro" id="IPR036736">
    <property type="entry name" value="ACP-like_sf"/>
</dbReference>
<dbReference type="InterPro" id="IPR014043">
    <property type="entry name" value="Acyl_transferase_dom"/>
</dbReference>
<dbReference type="InterPro" id="IPR016035">
    <property type="entry name" value="Acyl_Trfase/lysoPLipase"/>
</dbReference>
<dbReference type="InterPro" id="IPR045851">
    <property type="entry name" value="AMP-bd_C_sf"/>
</dbReference>
<dbReference type="InterPro" id="IPR020845">
    <property type="entry name" value="AMP-binding_CS"/>
</dbReference>
<dbReference type="InterPro" id="IPR000873">
    <property type="entry name" value="AMP-dep_synth/lig_dom"/>
</dbReference>
<dbReference type="InterPro" id="IPR042099">
    <property type="entry name" value="ANL_N_sf"/>
</dbReference>
<dbReference type="InterPro" id="IPR023213">
    <property type="entry name" value="CAT-like_dom_sf"/>
</dbReference>
<dbReference type="InterPro" id="IPR001242">
    <property type="entry name" value="Condensatn"/>
</dbReference>
<dbReference type="InterPro" id="IPR013120">
    <property type="entry name" value="Far_NAD-bd"/>
</dbReference>
<dbReference type="InterPro" id="IPR018201">
    <property type="entry name" value="Ketoacyl_synth_AS"/>
</dbReference>
<dbReference type="InterPro" id="IPR014031">
    <property type="entry name" value="Ketoacyl_synth_C"/>
</dbReference>
<dbReference type="InterPro" id="IPR014030">
    <property type="entry name" value="Ketoacyl_synth_N"/>
</dbReference>
<dbReference type="InterPro" id="IPR016036">
    <property type="entry name" value="Malonyl_transacylase_ACP-bd"/>
</dbReference>
<dbReference type="InterPro" id="IPR013217">
    <property type="entry name" value="Methyltransf_12"/>
</dbReference>
<dbReference type="InterPro" id="IPR036291">
    <property type="entry name" value="NAD(P)-bd_dom_sf"/>
</dbReference>
<dbReference type="InterPro" id="IPR032821">
    <property type="entry name" value="PKS_assoc"/>
</dbReference>
<dbReference type="InterPro" id="IPR020841">
    <property type="entry name" value="PKS_Beta-ketoAc_synthase_dom"/>
</dbReference>
<dbReference type="InterPro" id="IPR042104">
    <property type="entry name" value="PKS_dehydratase_sf"/>
</dbReference>
<dbReference type="InterPro" id="IPR020807">
    <property type="entry name" value="PKS_DH"/>
</dbReference>
<dbReference type="InterPro" id="IPR049551">
    <property type="entry name" value="PKS_DH_C"/>
</dbReference>
<dbReference type="InterPro" id="IPR049552">
    <property type="entry name" value="PKS_DH_N"/>
</dbReference>
<dbReference type="InterPro" id="IPR013968">
    <property type="entry name" value="PKS_KR"/>
</dbReference>
<dbReference type="InterPro" id="IPR049900">
    <property type="entry name" value="PKS_mFAS_DH"/>
</dbReference>
<dbReference type="InterPro" id="IPR050091">
    <property type="entry name" value="PKS_NRPS_Biosynth_Enz"/>
</dbReference>
<dbReference type="InterPro" id="IPR020806">
    <property type="entry name" value="PKS_PP-bd"/>
</dbReference>
<dbReference type="InterPro" id="IPR009081">
    <property type="entry name" value="PP-bd_ACP"/>
</dbReference>
<dbReference type="InterPro" id="IPR006162">
    <property type="entry name" value="Ppantetheine_attach_site"/>
</dbReference>
<dbReference type="InterPro" id="IPR029063">
    <property type="entry name" value="SAM-dependent_MTases_sf"/>
</dbReference>
<dbReference type="InterPro" id="IPR016039">
    <property type="entry name" value="Thiolase-like"/>
</dbReference>
<dbReference type="NCBIfam" id="TIGR01733">
    <property type="entry name" value="AA-adenyl-dom"/>
    <property type="match status" value="1"/>
</dbReference>
<dbReference type="PANTHER" id="PTHR43775">
    <property type="entry name" value="FATTY ACID SYNTHASE"/>
    <property type="match status" value="1"/>
</dbReference>
<dbReference type="PANTHER" id="PTHR43775:SF20">
    <property type="entry name" value="HYBRID PKS-NRPS SYNTHETASE APDA"/>
    <property type="match status" value="1"/>
</dbReference>
<dbReference type="Pfam" id="PF23297">
    <property type="entry name" value="ACP_SdgA_C"/>
    <property type="match status" value="1"/>
</dbReference>
<dbReference type="Pfam" id="PF00698">
    <property type="entry name" value="Acyl_transf_1"/>
    <property type="match status" value="1"/>
</dbReference>
<dbReference type="Pfam" id="PF00501">
    <property type="entry name" value="AMP-binding"/>
    <property type="match status" value="1"/>
</dbReference>
<dbReference type="Pfam" id="PF00668">
    <property type="entry name" value="Condensation"/>
    <property type="match status" value="1"/>
</dbReference>
<dbReference type="Pfam" id="PF16197">
    <property type="entry name" value="KAsynt_C_assoc"/>
    <property type="match status" value="1"/>
</dbReference>
<dbReference type="Pfam" id="PF00109">
    <property type="entry name" value="ketoacyl-synt"/>
    <property type="match status" value="1"/>
</dbReference>
<dbReference type="Pfam" id="PF02801">
    <property type="entry name" value="Ketoacyl-synt_C"/>
    <property type="match status" value="1"/>
</dbReference>
<dbReference type="Pfam" id="PF08659">
    <property type="entry name" value="KR"/>
    <property type="match status" value="1"/>
</dbReference>
<dbReference type="Pfam" id="PF08242">
    <property type="entry name" value="Methyltransf_12"/>
    <property type="match status" value="1"/>
</dbReference>
<dbReference type="Pfam" id="PF07993">
    <property type="entry name" value="NAD_binding_4"/>
    <property type="match status" value="1"/>
</dbReference>
<dbReference type="Pfam" id="PF21089">
    <property type="entry name" value="PKS_DH_N"/>
    <property type="match status" value="1"/>
</dbReference>
<dbReference type="Pfam" id="PF00550">
    <property type="entry name" value="PP-binding"/>
    <property type="match status" value="1"/>
</dbReference>
<dbReference type="Pfam" id="PF14765">
    <property type="entry name" value="PS-DH"/>
    <property type="match status" value="1"/>
</dbReference>
<dbReference type="SMART" id="SM00827">
    <property type="entry name" value="PKS_AT"/>
    <property type="match status" value="1"/>
</dbReference>
<dbReference type="SMART" id="SM00826">
    <property type="entry name" value="PKS_DH"/>
    <property type="match status" value="1"/>
</dbReference>
<dbReference type="SMART" id="SM00822">
    <property type="entry name" value="PKS_KR"/>
    <property type="match status" value="1"/>
</dbReference>
<dbReference type="SMART" id="SM00825">
    <property type="entry name" value="PKS_KS"/>
    <property type="match status" value="1"/>
</dbReference>
<dbReference type="SMART" id="SM00823">
    <property type="entry name" value="PKS_PP"/>
    <property type="match status" value="2"/>
</dbReference>
<dbReference type="SUPFAM" id="SSF56801">
    <property type="entry name" value="Acetyl-CoA synthetase-like"/>
    <property type="match status" value="1"/>
</dbReference>
<dbReference type="SUPFAM" id="SSF47336">
    <property type="entry name" value="ACP-like"/>
    <property type="match status" value="2"/>
</dbReference>
<dbReference type="SUPFAM" id="SSF52777">
    <property type="entry name" value="CoA-dependent acyltransferases"/>
    <property type="match status" value="2"/>
</dbReference>
<dbReference type="SUPFAM" id="SSF52151">
    <property type="entry name" value="FabD/lysophospholipase-like"/>
    <property type="match status" value="1"/>
</dbReference>
<dbReference type="SUPFAM" id="SSF51735">
    <property type="entry name" value="NAD(P)-binding Rossmann-fold domains"/>
    <property type="match status" value="2"/>
</dbReference>
<dbReference type="SUPFAM" id="SSF55048">
    <property type="entry name" value="Probable ACP-binding domain of malonyl-CoA ACP transacylase"/>
    <property type="match status" value="1"/>
</dbReference>
<dbReference type="SUPFAM" id="SSF53335">
    <property type="entry name" value="S-adenosyl-L-methionine-dependent methyltransferases"/>
    <property type="match status" value="1"/>
</dbReference>
<dbReference type="SUPFAM" id="SSF53901">
    <property type="entry name" value="Thiolase-like"/>
    <property type="match status" value="1"/>
</dbReference>
<dbReference type="PROSITE" id="PS00061">
    <property type="entry name" value="ADH_SHORT"/>
    <property type="match status" value="1"/>
</dbReference>
<dbReference type="PROSITE" id="PS00455">
    <property type="entry name" value="AMP_BINDING"/>
    <property type="match status" value="1"/>
</dbReference>
<dbReference type="PROSITE" id="PS50075">
    <property type="entry name" value="CARRIER"/>
    <property type="match status" value="2"/>
</dbReference>
<dbReference type="PROSITE" id="PS00606">
    <property type="entry name" value="KS3_1"/>
    <property type="match status" value="1"/>
</dbReference>
<dbReference type="PROSITE" id="PS52004">
    <property type="entry name" value="KS3_2"/>
    <property type="match status" value="1"/>
</dbReference>
<dbReference type="PROSITE" id="PS00012">
    <property type="entry name" value="PHOSPHOPANTETHEINE"/>
    <property type="match status" value="1"/>
</dbReference>
<dbReference type="PROSITE" id="PS52019">
    <property type="entry name" value="PKS_MFAS_DH"/>
    <property type="match status" value="1"/>
</dbReference>
<keyword id="KW-0413">Isomerase</keyword>
<keyword id="KW-0436">Ligase</keyword>
<keyword id="KW-0489">Methyltransferase</keyword>
<keyword id="KW-0511">Multifunctional enzyme</keyword>
<keyword id="KW-0560">Oxidoreductase</keyword>
<keyword id="KW-0596">Phosphopantetheine</keyword>
<keyword id="KW-0597">Phosphoprotein</keyword>
<keyword id="KW-1185">Reference proteome</keyword>
<keyword id="KW-0677">Repeat</keyword>
<keyword id="KW-0808">Transferase</keyword>
<protein>
    <recommendedName>
        <fullName evidence="9">Fusarin C synthetase</fullName>
        <shortName evidence="9">FUSS</shortName>
        <ecNumber evidence="12">2.3.1.-</ecNumber>
    </recommendedName>
    <alternativeName>
        <fullName evidence="10">Fusarin C cluster PKS/NRPS FUS1</fullName>
    </alternativeName>
    <alternativeName>
        <fullName evidence="9">Fusarin biosynthesis megasynthetase</fullName>
    </alternativeName>
    <alternativeName>
        <fullName evidence="10">Fusarin biosynthesis protein 1</fullName>
    </alternativeName>
</protein>
<name>FUS1_GIBM7</name>
<reference key="1">
    <citation type="journal article" date="2010" name="Nature">
        <title>Comparative genomics reveals mobile pathogenicity chromosomes in Fusarium.</title>
        <authorList>
            <person name="Ma L.-J."/>
            <person name="van der Does H.C."/>
            <person name="Borkovich K.A."/>
            <person name="Coleman J.J."/>
            <person name="Daboussi M.-J."/>
            <person name="Di Pietro A."/>
            <person name="Dufresne M."/>
            <person name="Freitag M."/>
            <person name="Grabherr M."/>
            <person name="Henrissat B."/>
            <person name="Houterman P.M."/>
            <person name="Kang S."/>
            <person name="Shim W.-B."/>
            <person name="Woloshuk C."/>
            <person name="Xie X."/>
            <person name="Xu J.-R."/>
            <person name="Antoniw J."/>
            <person name="Baker S.E."/>
            <person name="Bluhm B.H."/>
            <person name="Breakspear A."/>
            <person name="Brown D.W."/>
            <person name="Butchko R.A.E."/>
            <person name="Chapman S."/>
            <person name="Coulson R."/>
            <person name="Coutinho P.M."/>
            <person name="Danchin E.G.J."/>
            <person name="Diener A."/>
            <person name="Gale L.R."/>
            <person name="Gardiner D.M."/>
            <person name="Goff S."/>
            <person name="Hammond-Kosack K.E."/>
            <person name="Hilburn K."/>
            <person name="Hua-Van A."/>
            <person name="Jonkers W."/>
            <person name="Kazan K."/>
            <person name="Kodira C.D."/>
            <person name="Koehrsen M."/>
            <person name="Kumar L."/>
            <person name="Lee Y.-H."/>
            <person name="Li L."/>
            <person name="Manners J.M."/>
            <person name="Miranda-Saavedra D."/>
            <person name="Mukherjee M."/>
            <person name="Park G."/>
            <person name="Park J."/>
            <person name="Park S.-Y."/>
            <person name="Proctor R.H."/>
            <person name="Regev A."/>
            <person name="Ruiz-Roldan M.C."/>
            <person name="Sain D."/>
            <person name="Sakthikumar S."/>
            <person name="Sykes S."/>
            <person name="Schwartz D.C."/>
            <person name="Turgeon B.G."/>
            <person name="Wapinski I."/>
            <person name="Yoder O."/>
            <person name="Young S."/>
            <person name="Zeng Q."/>
            <person name="Zhou S."/>
            <person name="Galagan J."/>
            <person name="Cuomo C.A."/>
            <person name="Kistler H.C."/>
            <person name="Rep M."/>
        </authorList>
    </citation>
    <scope>NUCLEOTIDE SEQUENCE [LARGE SCALE GENOMIC DNA]</scope>
    <source>
        <strain>M3125 / FGSC 7600</strain>
    </source>
</reference>
<reference key="2">
    <citation type="journal article" date="2007" name="ChemBioChem">
        <title>Synthesis of [1,2-13C2, 15N]-L-homoserine and its incorporation by the PKS-NRPS system of Fusarium moniliforme into the mycotoxin fusarin C.</title>
        <authorList>
            <person name="Rees D.O."/>
            <person name="Bushby N."/>
            <person name="Cox R.J."/>
            <person name="Harding J.R."/>
            <person name="Simpson T.J."/>
            <person name="Willis C.L."/>
        </authorList>
    </citation>
    <scope>FUNCTION</scope>
    <scope>CATALYTIC ACTIVITY</scope>
</reference>
<reference key="3">
    <citation type="journal article" date="2012" name="Fungal Genet. Biol.">
        <title>Identification of gene clusters associated with fusaric acid, fusarin, and perithecial pigment production in Fusarium verticillioides.</title>
        <authorList>
            <person name="Brown D.W."/>
            <person name="Butchko R.A."/>
            <person name="Busman M."/>
            <person name="Proctor R.H."/>
        </authorList>
    </citation>
    <scope>FUNCTION</scope>
    <scope>DISRUPTION PHENOTYPE</scope>
    <scope>CATALYTIC ACTIVITY</scope>
</reference>
<feature type="chain" id="PRO_0000437356" description="Fusarin C synthetase">
    <location>
        <begin position="1"/>
        <end position="3916"/>
    </location>
</feature>
<feature type="domain" description="Ketosynthase family 3 (KS3)" evidence="4">
    <location>
        <begin position="9"/>
        <end position="440"/>
    </location>
</feature>
<feature type="domain" description="PKS/mFAS DH" evidence="5">
    <location>
        <begin position="935"/>
        <end position="1231"/>
    </location>
</feature>
<feature type="domain" description="Carrier 1" evidence="3">
    <location>
        <begin position="2372"/>
        <end position="2449"/>
    </location>
</feature>
<feature type="domain" description="Carrier 2" evidence="3">
    <location>
        <begin position="3493"/>
        <end position="3570"/>
    </location>
</feature>
<feature type="region of interest" description="Malonyl-CoA:ACP transacylase (MAT) domain" evidence="2">
    <location>
        <begin position="548"/>
        <end position="869"/>
    </location>
</feature>
<feature type="region of interest" description="Dehydratase (DH) domain" evidence="2">
    <location>
        <begin position="935"/>
        <end position="1228"/>
    </location>
</feature>
<feature type="region of interest" description="N-terminal hotdog fold" evidence="5">
    <location>
        <begin position="935"/>
        <end position="1068"/>
    </location>
</feature>
<feature type="region of interest" description="C-terminal hotdog fold" evidence="5">
    <location>
        <begin position="1084"/>
        <end position="1231"/>
    </location>
</feature>
<feature type="region of interest" description="C-methyltransferase (CMeT) domain" evidence="2">
    <location>
        <begin position="1350"/>
        <end position="1584"/>
    </location>
</feature>
<feature type="region of interest" description="Ketoreductase (KR) domain 1" evidence="2">
    <location>
        <begin position="2092"/>
        <end position="2266"/>
    </location>
</feature>
<feature type="region of interest" description="Disordered" evidence="6">
    <location>
        <begin position="2482"/>
        <end position="2511"/>
    </location>
</feature>
<feature type="region of interest" description="Condensation" evidence="2">
    <location>
        <begin position="2522"/>
        <end position="2806"/>
    </location>
</feature>
<feature type="region of interest" description="Adenylation" evidence="2">
    <location>
        <begin position="2973"/>
        <end position="3385"/>
    </location>
</feature>
<feature type="region of interest" description="Thiolester reductase (R) domain" evidence="2">
    <location>
        <begin position="3612"/>
        <end position="3833"/>
    </location>
</feature>
<feature type="compositionally biased region" description="Polar residues" evidence="6">
    <location>
        <begin position="2486"/>
        <end position="2505"/>
    </location>
</feature>
<feature type="active site" description="For beta-ketoacyl synthase activity" evidence="4">
    <location>
        <position position="182"/>
    </location>
</feature>
<feature type="active site" description="For beta-ketoacyl synthase activity" evidence="4">
    <location>
        <position position="319"/>
    </location>
</feature>
<feature type="active site" description="For beta-ketoacyl synthase activity" evidence="4">
    <location>
        <position position="360"/>
    </location>
</feature>
<feature type="active site" description="Proton acceptor; for dehydratase activity" evidence="5">
    <location>
        <position position="967"/>
    </location>
</feature>
<feature type="active site" description="Proton donor; for dehydratase activity" evidence="5">
    <location>
        <position position="1141"/>
    </location>
</feature>
<feature type="modified residue" description="O-(pantetheine 4'-phosphoryl)serine" evidence="3">
    <location>
        <position position="2409"/>
    </location>
</feature>
<feature type="modified residue" description="O-(pantetheine 4'-phosphoryl)serine" evidence="3">
    <location>
        <position position="3530"/>
    </location>
</feature>
<accession>W7MLD7</accession>
<sequence length="3916" mass="430469">MADNQSLPKEPIAIIGTSCRFPGGANTPSKLWDLLCEKRDVQSRIPNDRFNVDAFYSTNGDKNGCTDVKRAYLLSEDIRVFDASFFKINPREAEAMDPQQRLLLEAVYEATEAAGLPMEDLKGSDTAVYVGCMTGDYHEMLMRDPQDMPKYMATGTARSILSNRISYLFDWKGPSMTIDTACSSSLVAVYDAVTALRNGVSKIACAGGANLILGPEMMISESKLHMLSPTGRSRMWDASANGYARGEGVAAIMMKTLSQALADGDHIQGVIREIGVNSDGRTNGITLPSPEAQKFLIRQTYKKAGLDVFKDRCQFFEAHGTGTPAGDPLEARAIHEAFFTDGDIVSEPMYVGSVKTAIGHLEGCAGLAGLIKALEAVKRGVIPPNQLFENLNPALKPYVSNLRLPTESKPWPKLAPGSARRASVNSFGFGGTNVHAIIEQFDHAQREASSADGIISTPLVLSANSDLSLRKQIAHFAEAIEHNDKGEVDRIIFTLAQRRSQLPLRAYFSGHGLQSIQQKLRDATAENAVLPFISQTVPPGQPPRILGVFTGQGAQWPTMGREILKASPFARTVMASLEESLASLAEPPIWTLTEQIMADKDFSRLSEAAISQPLCTAVQIMVVELLRKAGIAFNCVIGHSSGEITAAYTAGFLSATDAIRVAYLRGVCAKLAGGGNGETGSMMAVGLSYEEASAFCEENFAGLVDVAASNAPASTTLSGDKPSIEEAKASLDAQGTFARILKVDTAYHSHHMNPCAQPYLEKLQAAGVKSLPGDDSVEWYSSVLGERITASLHSEALCDEYWVENMVNPVLFSVASELVAEANPPCHVALEVGPHPALKGPFNQTYKRATGSPLPYHGTVTRNIHDVEALSNSLGFLWSHLGKSAVDFTAYTQSFSPSITAMADGLPPYAWDHTQSFWRESRKSLNYRQRTQPPHPLLGARSVEDTADSMRWINYLRLDDVPWLEGHKVEGQVVYPAAGYLVMAMEAARAIDASKEIQLTELSDVHILSAIQLTEGSQALETVFTLQVERNEPTFATASWTLSTPMSGRNDSWKSNAKGQLRVEFSSLDDAARLPSRSKPIASLTSVDMERFYSALANIGLEYTGEFKQLKSIDRQLGLATAHVGQVVPDFPAMIHPALLDGAFQSIFAAYCWPDDGSLQAPFVPTFFRSLRIANTSHLRHGEDLVIDSFLTNTNERELTADMDIFQSAEGQPVLQLQGLTCTSLLRPGPSNAKELYTKTEWEVDIASGIAQSDTQDQDTASDLELVDLCERLSYFYLRELNKAVGREEVSGFDWHYQRIFEWIDHLFPLIQSGRHPTIKTEWSSDSRDWLMQQSARFPGRIDLQLIQAVGENLPAVVRKQTTMLEHMVKDDMLNRIYKFGLGFERANVYLGRISKQIAHRYPRMNILEIGAGTGGATKGIMESLGTAFETYTFTDISTGFFEAAAEAFDHWADKMIFKPLNIESDPTDQGFPQGHYDFIIASNVLHATKSLAVTMRNTRKLLKPGGQLLLLEVTSDIVRVKLMMSGLSGWWLGGDDGRRYGPTIPVSQWDALLKQTGFSGVDKTVNDFVDAEKYMTSVMLSQAVDDRMEILRQPRLASSHWLSSQSITVVGGHCQDIGKDAMAIIHQMGHASSKPVIHHVGSFEELASSNIQTRSALVLEDLDEPILKDLTEDKLRGVQRLINESRQVLWVSRGCQKDEPFANMSIGMCRSLSSEYPHIHLQHVDIEGLVGPMTASLLVDAFLQLMYRASLKSDDLVWSIEAELVLREDKWFIPRVKSDEALNNQLNASKMTIRSVKTLHGDAVEIQQRSNQFVIAEPIPCIPVSASSPPVAITVTHSLLFPFQVGTKSSGYLCYGYIDSQPQTRVLAISGVNRSKISVPPFFVWDLSSSEIDAADLLRKTALAITADRLLSDFEAGATVLIHESDENLGAALQWKAAELDLNVILTTSESSMERSTDSLFIHALAPERLVNHIMPQCTKAVIDLSGRDYRIVDSPLRRCLPAHCKFHQLQDILGNASQGVNDPIIHGVRDASRSTLQLSGDGPVINLSDLSNMRPSIKDYATIVEFSVDTTIPAVVQPLEGSQLFRSDKTYLLIGFTGGLGKALCRWMVSCGVRHLALTTRNVAAIDQVWLQELRIQGAQVNLYQADVSDKAALSQAYDQIVKEMPPVCGAANAALLLSDRTFTELKVKDFTQVFGPKVKGTQNLHELLLDQKLDFFIMFSSLASVVGNRGQANYAASNLFMSAIAEQRRAKGLAASVMHIGMVLGVGYVSSTGAYEATLRSSNYMAISETDLLNMFSQAILVGQPSSTHAPELITGLNRFSLEPEAQKYFWRDNMRFCHHTLEEEHQERTSTTKVSISQRLSETKGTAEILAVVEEEFCTKLERLLQAEAGSVKTSQSLLGLGVDSLVAAEIRSWFLKELEVDTPVLEILNTASITELCSTVVSHLPTISEDTETKTEVTKQAIKTLNVVETSTVVSSASPTENEPFTIRNSPNSTQVTSESGVDEETSIQSKIDRSGPLSFAQERLWFLQQFLRDHSTYNVTMHYHISGPLRLHDLERAFQQVIHRHESLRTSFFIDPDTDLPTQAVLKDSSFRLEQKHNSTAKIEYKAMQGMSYDLENGNVVKAVIVPDSDGEFDLIFGFHHIALDGYSAQIMVRDLAMIYAGQTLSSKQQDYLDFAIAQKAAKVPYTTLAYWRSELEDLPPTLTVFDFAETKTRIPLTDYTTRALERRLSIEQSRSIKAVAKRLDVTPFHVHLATLQVVLSDLASANDLCIGITDANKNDATHIDTVGFFVNLLPLRLKLSSSQTLADLVANAKSKANGALSHSDMPFDVLLDEMKLPRSTTHSPLFQVVMNYKMGSTQKVPLADCQAQLVAFEDANNPYDLTFDIETYYDGSASISVKTQEYLYSESELSFVLDNYVEKLDLFTSEPSQTVDQICKPTAEQIGKALTLGRGERIPSPRLETLSHYFEKCVVNQPDDVALVTDKGQALTWSQLKALVNQIAMALVEAGAKQDSQVGVYCDPSMYILPTLIAIAEIGGVYVPLDTQNPIKRLQLMVDDCQADVLLIDDSTATLSLELETKAKMINVNTIKAGPSNTFHLDNRARGNGMGYIFYTSGTTGVPKAVALTHTSLVHHFDGFIHCNNLNKCRMLQQAPLGFDMSLTQMTLAIMLGGTLIVASSETRKDPTQLAQLMLDEKVTHTFMTPTLALSVIHHGYEYLRQCVDWEHASLAGEAMTTRVTSEFKRLGLRNLELCNGYGPTEITIIATCGSNELGDTLRDTHNPSIGRALPNYSCYILDENMQPVRPGLAGELVIGGAGVAIGYLNRQDLTEAKFLSDPFAPPEDVARGWTRMYRTGDKARFLSDGRLCFLGRIAGDSQIKLRGFRIELQDIASTIVKASDGKVPEAAVSLRGEGDSAYLVAFVILSQFNRPSDEKGYLKQLLEELSLPRYMKPAKIISISQLPMNASGKLDQYALDALPVSYEKDIVDKPLTETQERLKLGWLKALPFVDAAIGPDTDFFSAGGNSLRIVSLREYITREFGVTVSVFDLFQASTLGEMAAKIDGFTTQEATTISIDWEEETRIDADLNIVGVQEPLPSEATNGLQVALTGATGFLGVSILETLLEDKRVSKVHCLAVRSSSNTSDPVFSSSRVACYPGDLSLPRLGLSQEQFDQLANAVDRIIHNGADVSFLKTYQSLQRSNVSSSRELARMAITRRIPMHFVSTGGVVQLTGQDGLDEVSVIDSTPPNDGSLGYVASKWASEAILEKYASQYNLPVWIHRPSNITGPNAPKADLMQNIFHYSAKTASLPDLASWSGCFDFVPVDVVAAGIASSIYETQETVAYKHHCGTEKISVEDLPSYLEAKHGKIETVSIEEWLERSKAAGLDEVTAVLVEKTLSRGGIVPWLRREAN</sequence>
<evidence type="ECO:0000250" key="1">
    <source>
        <dbReference type="UniProtKB" id="S0EEY3"/>
    </source>
</evidence>
<evidence type="ECO:0000255" key="2"/>
<evidence type="ECO:0000255" key="3">
    <source>
        <dbReference type="PROSITE-ProRule" id="PRU00258"/>
    </source>
</evidence>
<evidence type="ECO:0000255" key="4">
    <source>
        <dbReference type="PROSITE-ProRule" id="PRU01348"/>
    </source>
</evidence>
<evidence type="ECO:0000255" key="5">
    <source>
        <dbReference type="PROSITE-ProRule" id="PRU01363"/>
    </source>
</evidence>
<evidence type="ECO:0000256" key="6">
    <source>
        <dbReference type="SAM" id="MobiDB-lite"/>
    </source>
</evidence>
<evidence type="ECO:0000269" key="7">
    <source>
    </source>
</evidence>
<evidence type="ECO:0000269" key="8">
    <source>
    </source>
</evidence>
<evidence type="ECO:0000303" key="9">
    <source>
    </source>
</evidence>
<evidence type="ECO:0000303" key="10">
    <source>
    </source>
</evidence>
<evidence type="ECO:0000305" key="11"/>
<evidence type="ECO:0000305" key="12">
    <source>
    </source>
</evidence>
<evidence type="ECO:0000305" key="13">
    <source>
    </source>
</evidence>